<name>RS19_TREPS</name>
<protein>
    <recommendedName>
        <fullName evidence="1">Small ribosomal subunit protein uS19</fullName>
    </recommendedName>
    <alternativeName>
        <fullName evidence="2">30S ribosomal protein S19</fullName>
    </alternativeName>
</protein>
<reference key="1">
    <citation type="journal article" date="2008" name="BMC Microbiol.">
        <title>Complete genome sequence of Treponema pallidum ssp. pallidum strain SS14 determined with oligonucleotide arrays.</title>
        <authorList>
            <person name="Matejkova P."/>
            <person name="Strouhal M."/>
            <person name="Smajs D."/>
            <person name="Norris S.J."/>
            <person name="Palzkill T."/>
            <person name="Petrosino J.F."/>
            <person name="Sodergren E."/>
            <person name="Norton J.E."/>
            <person name="Singh J."/>
            <person name="Richmond T.A."/>
            <person name="Molla M.N."/>
            <person name="Albert T.J."/>
            <person name="Weinstock G.M."/>
        </authorList>
    </citation>
    <scope>NUCLEOTIDE SEQUENCE [LARGE SCALE GENOMIC DNA]</scope>
    <source>
        <strain>SS14</strain>
    </source>
</reference>
<comment type="function">
    <text evidence="1">Protein S19 forms a complex with S13 that binds strongly to the 16S ribosomal RNA.</text>
</comment>
<comment type="similarity">
    <text evidence="1">Belongs to the universal ribosomal protein uS19 family.</text>
</comment>
<feature type="chain" id="PRO_1000128053" description="Small ribosomal subunit protein uS19">
    <location>
        <begin position="1"/>
        <end position="95"/>
    </location>
</feature>
<organism>
    <name type="scientific">Treponema pallidum subsp. pallidum (strain SS14)</name>
    <dbReference type="NCBI Taxonomy" id="455434"/>
    <lineage>
        <taxon>Bacteria</taxon>
        <taxon>Pseudomonadati</taxon>
        <taxon>Spirochaetota</taxon>
        <taxon>Spirochaetia</taxon>
        <taxon>Spirochaetales</taxon>
        <taxon>Treponemataceae</taxon>
        <taxon>Treponema</taxon>
    </lineage>
</organism>
<gene>
    <name evidence="1" type="primary">rpsS</name>
    <name type="ordered locus">TPASS_0193</name>
</gene>
<keyword id="KW-0687">Ribonucleoprotein</keyword>
<keyword id="KW-0689">Ribosomal protein</keyword>
<keyword id="KW-0694">RNA-binding</keyword>
<keyword id="KW-0699">rRNA-binding</keyword>
<proteinExistence type="inferred from homology"/>
<dbReference type="EMBL" id="CP000805">
    <property type="protein sequence ID" value="ACD70619.1"/>
    <property type="molecule type" value="Genomic_DNA"/>
</dbReference>
<dbReference type="RefSeq" id="WP_010881640.1">
    <property type="nucleotide sequence ID" value="NC_021508.1"/>
</dbReference>
<dbReference type="SMR" id="B2S2E0"/>
<dbReference type="GeneID" id="93875981"/>
<dbReference type="KEGG" id="tpp:TPASS_0193"/>
<dbReference type="PATRIC" id="fig|455434.6.peg.196"/>
<dbReference type="Proteomes" id="UP000001202">
    <property type="component" value="Chromosome"/>
</dbReference>
<dbReference type="GO" id="GO:0005737">
    <property type="term" value="C:cytoplasm"/>
    <property type="evidence" value="ECO:0007669"/>
    <property type="project" value="UniProtKB-ARBA"/>
</dbReference>
<dbReference type="GO" id="GO:0015935">
    <property type="term" value="C:small ribosomal subunit"/>
    <property type="evidence" value="ECO:0007669"/>
    <property type="project" value="InterPro"/>
</dbReference>
<dbReference type="GO" id="GO:0019843">
    <property type="term" value="F:rRNA binding"/>
    <property type="evidence" value="ECO:0007669"/>
    <property type="project" value="UniProtKB-UniRule"/>
</dbReference>
<dbReference type="GO" id="GO:0003735">
    <property type="term" value="F:structural constituent of ribosome"/>
    <property type="evidence" value="ECO:0007669"/>
    <property type="project" value="InterPro"/>
</dbReference>
<dbReference type="GO" id="GO:0000028">
    <property type="term" value="P:ribosomal small subunit assembly"/>
    <property type="evidence" value="ECO:0007669"/>
    <property type="project" value="TreeGrafter"/>
</dbReference>
<dbReference type="GO" id="GO:0006412">
    <property type="term" value="P:translation"/>
    <property type="evidence" value="ECO:0007669"/>
    <property type="project" value="UniProtKB-UniRule"/>
</dbReference>
<dbReference type="FunFam" id="3.30.860.10:FF:000001">
    <property type="entry name" value="30S ribosomal protein S19"/>
    <property type="match status" value="1"/>
</dbReference>
<dbReference type="Gene3D" id="3.30.860.10">
    <property type="entry name" value="30s Ribosomal Protein S19, Chain A"/>
    <property type="match status" value="1"/>
</dbReference>
<dbReference type="HAMAP" id="MF_00531">
    <property type="entry name" value="Ribosomal_uS19"/>
    <property type="match status" value="1"/>
</dbReference>
<dbReference type="InterPro" id="IPR002222">
    <property type="entry name" value="Ribosomal_uS19"/>
</dbReference>
<dbReference type="InterPro" id="IPR005732">
    <property type="entry name" value="Ribosomal_uS19_bac-type"/>
</dbReference>
<dbReference type="InterPro" id="IPR020934">
    <property type="entry name" value="Ribosomal_uS19_CS"/>
</dbReference>
<dbReference type="InterPro" id="IPR023575">
    <property type="entry name" value="Ribosomal_uS19_SF"/>
</dbReference>
<dbReference type="NCBIfam" id="TIGR01050">
    <property type="entry name" value="rpsS_bact"/>
    <property type="match status" value="1"/>
</dbReference>
<dbReference type="PANTHER" id="PTHR11880">
    <property type="entry name" value="RIBOSOMAL PROTEIN S19P FAMILY MEMBER"/>
    <property type="match status" value="1"/>
</dbReference>
<dbReference type="PANTHER" id="PTHR11880:SF8">
    <property type="entry name" value="SMALL RIBOSOMAL SUBUNIT PROTEIN US19M"/>
    <property type="match status" value="1"/>
</dbReference>
<dbReference type="Pfam" id="PF00203">
    <property type="entry name" value="Ribosomal_S19"/>
    <property type="match status" value="1"/>
</dbReference>
<dbReference type="PIRSF" id="PIRSF002144">
    <property type="entry name" value="Ribosomal_S19"/>
    <property type="match status" value="1"/>
</dbReference>
<dbReference type="PRINTS" id="PR00975">
    <property type="entry name" value="RIBOSOMALS19"/>
</dbReference>
<dbReference type="SUPFAM" id="SSF54570">
    <property type="entry name" value="Ribosomal protein S19"/>
    <property type="match status" value="1"/>
</dbReference>
<dbReference type="PROSITE" id="PS00323">
    <property type="entry name" value="RIBOSOMAL_S19"/>
    <property type="match status" value="1"/>
</dbReference>
<evidence type="ECO:0000255" key="1">
    <source>
        <dbReference type="HAMAP-Rule" id="MF_00531"/>
    </source>
</evidence>
<evidence type="ECO:0000305" key="2"/>
<accession>B2S2E0</accession>
<sequence length="95" mass="10816">MSRSVKKGPFVDKKLYKRVVEMNKAANQRNKKVIKSYSRCSTIIPEMVGFTISVHNGKSWIPVYITEEFVGHKLGEFSPTRVFRGHSGSDKKVGR</sequence>